<proteinExistence type="evidence at protein level"/>
<name>NHAA_PSETH</name>
<dbReference type="EC" id="4.2.1.84"/>
<dbReference type="PDB" id="1IRE">
    <property type="method" value="X-ray"/>
    <property type="resolution" value="1.80 A"/>
    <property type="chains" value="A=1-204"/>
</dbReference>
<dbReference type="PDB" id="1UGP">
    <property type="method" value="X-ray"/>
    <property type="resolution" value="1.63 A"/>
    <property type="chains" value="A=2-204"/>
</dbReference>
<dbReference type="PDB" id="1UGQ">
    <property type="method" value="X-ray"/>
    <property type="resolution" value="2.00 A"/>
    <property type="chains" value="A=2-204"/>
</dbReference>
<dbReference type="PDB" id="1UGR">
    <property type="method" value="X-ray"/>
    <property type="resolution" value="1.80 A"/>
    <property type="chains" value="A=2-204"/>
</dbReference>
<dbReference type="PDB" id="1UGS">
    <property type="method" value="X-ray"/>
    <property type="resolution" value="2.00 A"/>
    <property type="chains" value="A=2-204"/>
</dbReference>
<dbReference type="PDB" id="3VYH">
    <property type="method" value="X-ray"/>
    <property type="resolution" value="1.63 A"/>
    <property type="chains" value="A=1-204"/>
</dbReference>
<dbReference type="PDB" id="4OB0">
    <property type="method" value="X-ray"/>
    <property type="resolution" value="1.20 A"/>
    <property type="chains" value="A=1-204"/>
</dbReference>
<dbReference type="PDB" id="4OB1">
    <property type="method" value="X-ray"/>
    <property type="resolution" value="1.63 A"/>
    <property type="chains" value="A=1-204"/>
</dbReference>
<dbReference type="PDB" id="4OB2">
    <property type="method" value="X-ray"/>
    <property type="resolution" value="1.52 A"/>
    <property type="chains" value="A=2-204"/>
</dbReference>
<dbReference type="PDB" id="4OB3">
    <property type="method" value="X-ray"/>
    <property type="resolution" value="1.92 A"/>
    <property type="chains" value="A=1-204"/>
</dbReference>
<dbReference type="PDB" id="7SJZ">
    <property type="method" value="X-ray"/>
    <property type="resolution" value="1.85 A"/>
    <property type="chains" value="A=1-204"/>
</dbReference>
<dbReference type="PDB" id="7W8L">
    <property type="method" value="X-ray"/>
    <property type="resolution" value="2.30 A"/>
    <property type="chains" value="A=1-204"/>
</dbReference>
<dbReference type="PDB" id="7W8M">
    <property type="method" value="X-ray"/>
    <property type="resolution" value="2.60 A"/>
    <property type="chains" value="A=1-204"/>
</dbReference>
<dbReference type="PDB" id="8I6N">
    <property type="method" value="X-ray"/>
    <property type="resolution" value="2.20 A"/>
    <property type="chains" value="A=1-204"/>
</dbReference>
<dbReference type="PDB" id="9D5U">
    <property type="method" value="X-ray"/>
    <property type="resolution" value="1.35 A"/>
    <property type="chains" value="A=1-204"/>
</dbReference>
<dbReference type="PDB" id="9D5V">
    <property type="method" value="X-ray"/>
    <property type="resolution" value="1.26 A"/>
    <property type="chains" value="A=1-204"/>
</dbReference>
<dbReference type="PDB" id="9D5Y">
    <property type="method" value="X-ray"/>
    <property type="resolution" value="1.35 A"/>
    <property type="chains" value="A=1-204"/>
</dbReference>
<dbReference type="PDB" id="9D65">
    <property type="method" value="X-ray"/>
    <property type="resolution" value="1.45 A"/>
    <property type="chains" value="A=1-204"/>
</dbReference>
<dbReference type="PDB" id="9D6J">
    <property type="method" value="X-ray"/>
    <property type="resolution" value="1.47 A"/>
    <property type="chains" value="A=1-204"/>
</dbReference>
<dbReference type="PDB" id="9D6K">
    <property type="method" value="X-ray"/>
    <property type="resolution" value="1.29 A"/>
    <property type="chains" value="A=2-204"/>
</dbReference>
<dbReference type="PDB" id="9D6M">
    <property type="method" value="X-ray"/>
    <property type="resolution" value="1.56 A"/>
    <property type="chains" value="A=1-204"/>
</dbReference>
<dbReference type="PDBsum" id="1IRE"/>
<dbReference type="PDBsum" id="1UGP"/>
<dbReference type="PDBsum" id="1UGQ"/>
<dbReference type="PDBsum" id="1UGR"/>
<dbReference type="PDBsum" id="1UGS"/>
<dbReference type="PDBsum" id="3VYH"/>
<dbReference type="PDBsum" id="4OB0"/>
<dbReference type="PDBsum" id="4OB1"/>
<dbReference type="PDBsum" id="4OB2"/>
<dbReference type="PDBsum" id="4OB3"/>
<dbReference type="PDBsum" id="7SJZ"/>
<dbReference type="PDBsum" id="7W8L"/>
<dbReference type="PDBsum" id="7W8M"/>
<dbReference type="PDBsum" id="8I6N"/>
<dbReference type="PDBsum" id="9D5U"/>
<dbReference type="PDBsum" id="9D5V"/>
<dbReference type="PDBsum" id="9D5Y"/>
<dbReference type="PDBsum" id="9D65"/>
<dbReference type="PDBsum" id="9D6J"/>
<dbReference type="PDBsum" id="9D6K"/>
<dbReference type="PDBsum" id="9D6M"/>
<dbReference type="SMR" id="Q7SID2"/>
<dbReference type="IntAct" id="Q7SID2">
    <property type="interactions" value="1"/>
</dbReference>
<dbReference type="STRING" id="1848.SAMN05443637_10361"/>
<dbReference type="BRENDA" id="4.2.1.84">
    <property type="organism ID" value="5208"/>
</dbReference>
<dbReference type="EvolutionaryTrace" id="Q7SID2"/>
<dbReference type="GO" id="GO:0050897">
    <property type="term" value="F:cobalt ion binding"/>
    <property type="evidence" value="ECO:0000314"/>
    <property type="project" value="UniProtKB"/>
</dbReference>
<dbReference type="GO" id="GO:0018822">
    <property type="term" value="F:nitrile hydratase activity"/>
    <property type="evidence" value="ECO:0000314"/>
    <property type="project" value="UniProtKB"/>
</dbReference>
<dbReference type="GO" id="GO:0050899">
    <property type="term" value="P:nitrile catabolic process"/>
    <property type="evidence" value="ECO:0000314"/>
    <property type="project" value="UniProtKB"/>
</dbReference>
<dbReference type="Gene3D" id="3.90.330.10">
    <property type="entry name" value="Nitrile hydratase alpha /Thiocyanate hydrolase gamma"/>
    <property type="match status" value="1"/>
</dbReference>
<dbReference type="InterPro" id="IPR036648">
    <property type="entry name" value="CN_Hdrase_a/SCN_Hdrase_g_sf"/>
</dbReference>
<dbReference type="InterPro" id="IPR004232">
    <property type="entry name" value="CN_Hdrtase_a/SCN_Hdrlase_g"/>
</dbReference>
<dbReference type="InterPro" id="IPR023900">
    <property type="entry name" value="CN_Hdrtase_asu/SCN_Hdrlase_gsu"/>
</dbReference>
<dbReference type="InterPro" id="IPR018141">
    <property type="entry name" value="Nitrile_hydratase_asu"/>
</dbReference>
<dbReference type="NCBIfam" id="TIGR01323">
    <property type="entry name" value="nitrile_alph"/>
    <property type="match status" value="1"/>
</dbReference>
<dbReference type="Pfam" id="PF02979">
    <property type="entry name" value="NHase_alpha"/>
    <property type="match status" value="1"/>
</dbReference>
<dbReference type="PIRSF" id="PIRSF001426">
    <property type="entry name" value="NHase_alpha"/>
    <property type="match status" value="1"/>
</dbReference>
<dbReference type="SUPFAM" id="SSF56209">
    <property type="entry name" value="Nitrile hydratase alpha chain"/>
    <property type="match status" value="1"/>
</dbReference>
<feature type="initiator methionine" description="Removed" evidence="2">
    <location>
        <position position="1"/>
    </location>
</feature>
<feature type="chain" id="PRO_0000186822" description="Cobalt-containing nitrile hydratase subunit alpha">
    <location>
        <begin position="2"/>
        <end position="204"/>
    </location>
</feature>
<feature type="binding site" evidence="1">
    <location>
        <position position="108"/>
    </location>
    <ligand>
        <name>Co(2+)</name>
        <dbReference type="ChEBI" id="CHEBI:48828"/>
    </ligand>
</feature>
<feature type="binding site" evidence="1">
    <location>
        <position position="111"/>
    </location>
    <ligand>
        <name>Co(2+)</name>
        <dbReference type="ChEBI" id="CHEBI:48828"/>
    </ligand>
</feature>
<feature type="binding site" evidence="1">
    <location>
        <position position="112"/>
    </location>
    <ligand>
        <name>Co(2+)</name>
        <dbReference type="ChEBI" id="CHEBI:48828"/>
    </ligand>
</feature>
<feature type="binding site" evidence="1">
    <location>
        <position position="113"/>
    </location>
    <ligand>
        <name>Co(2+)</name>
        <dbReference type="ChEBI" id="CHEBI:48828"/>
    </ligand>
</feature>
<feature type="modified residue" description="Cysteine sulfinic acid (-SO2H)" evidence="1">
    <location>
        <position position="111"/>
    </location>
</feature>
<feature type="modified residue" description="Cysteine sulfenic acid (-SOH)" evidence="1">
    <location>
        <position position="113"/>
    </location>
</feature>
<feature type="sequence conflict" description="In Ref. 2." evidence="3" ref="2">
    <original>C</original>
    <variation>A</variation>
    <location>
        <position position="111"/>
    </location>
</feature>
<feature type="helix" evidence="5">
    <location>
        <begin position="10"/>
        <end position="30"/>
    </location>
</feature>
<feature type="helix" evidence="5">
    <location>
        <begin position="36"/>
        <end position="48"/>
    </location>
</feature>
<feature type="helix" evidence="5">
    <location>
        <begin position="52"/>
        <end position="64"/>
    </location>
</feature>
<feature type="helix" evidence="5">
    <location>
        <begin position="66"/>
        <end position="74"/>
    </location>
</feature>
<feature type="helix" evidence="5">
    <location>
        <begin position="76"/>
        <end position="81"/>
    </location>
</feature>
<feature type="turn" evidence="5">
    <location>
        <begin position="82"/>
        <end position="84"/>
    </location>
</feature>
<feature type="strand" evidence="5">
    <location>
        <begin position="91"/>
        <end position="97"/>
    </location>
</feature>
<feature type="strand" evidence="5">
    <location>
        <begin position="100"/>
        <end position="107"/>
    </location>
</feature>
<feature type="strand" evidence="7">
    <location>
        <begin position="109"/>
        <end position="111"/>
    </location>
</feature>
<feature type="helix" evidence="5">
    <location>
        <begin position="116"/>
        <end position="119"/>
    </location>
</feature>
<feature type="helix" evidence="5">
    <location>
        <begin position="124"/>
        <end position="127"/>
    </location>
</feature>
<feature type="helix" evidence="5">
    <location>
        <begin position="129"/>
        <end position="135"/>
    </location>
</feature>
<feature type="helix" evidence="5">
    <location>
        <begin position="139"/>
        <end position="147"/>
    </location>
</feature>
<feature type="strand" evidence="5">
    <location>
        <begin position="155"/>
        <end position="161"/>
    </location>
</feature>
<feature type="strand" evidence="5">
    <location>
        <begin position="164"/>
        <end position="171"/>
    </location>
</feature>
<feature type="helix" evidence="5">
    <location>
        <begin position="183"/>
        <end position="187"/>
    </location>
</feature>
<feature type="helix" evidence="5">
    <location>
        <begin position="192"/>
        <end position="196"/>
    </location>
</feature>
<feature type="strand" evidence="6">
    <location>
        <begin position="197"/>
        <end position="199"/>
    </location>
</feature>
<keyword id="KW-0002">3D-structure</keyword>
<keyword id="KW-0170">Cobalt</keyword>
<keyword id="KW-0903">Direct protein sequencing</keyword>
<keyword id="KW-0456">Lyase</keyword>
<keyword id="KW-0479">Metal-binding</keyword>
<keyword id="KW-0558">Oxidation</keyword>
<sequence>MTENILRKSDEEIQKEITARVKALESMLIEQGILTTSMIDRMAEIYENEVGPHLGAKVVVKAWTDPEFKKRLLADGTEACKELGIGGLQGEDMMWVENTDEVHHVVVCTLCSCYPWPVLGLPPNWFKEPQYRSRVVREPRQLLKEEFGFEVPPSKEIKVWDSSSEMRFVVLPQRPAGTDGWSEEELATLVTRESMIGVEPAKAV</sequence>
<reference evidence="3" key="1">
    <citation type="journal article" date="1997" name="J. Ferment. Bioeng.">
        <title>Cloning and sequencing of a nitrile hydratase gene from Pseudonocardia thermophila JCM3095.</title>
        <authorList>
            <person name="Yamaki T."/>
            <person name="Oikawa T."/>
            <person name="Ito K."/>
            <person name="Nakamura T."/>
        </authorList>
    </citation>
    <scope>NUCLEOTIDE SEQUENCE [GENOMIC DNA]</scope>
    <scope>PROTEIN SEQUENCE OF 2-6</scope>
    <scope>CATALYTIC ACTIVITY</scope>
    <scope>COFACTOR</scope>
    <source>
        <strain>ATCC 19285 / DSM 43832 / JCM 3095 / CBS 277.66 / NBRC 15559 / NCIMB 10079 / NRRL B-1978</strain>
    </source>
</reference>
<reference evidence="4" key="2">
    <citation type="journal article" date="2001" name="Biochem. Biophys. Res. Commun.">
        <title>Crystal structure of cobalt-containing nitrile hydratase.</title>
        <authorList>
            <person name="Miyanaga A."/>
            <person name="Fushinobu S."/>
            <person name="Ito K."/>
            <person name="Wakagi T."/>
        </authorList>
    </citation>
    <scope>X-RAY CRYSTALLOGRAPHY (1.8 ANGSTROMS) IN COMPLEX WITH COBALT</scope>
    <scope>OXIDATION AT CYS-111 AND CYS-113</scope>
    <scope>COFACTOR</scope>
    <source>
        <strain>ATCC 19285 / DSM 43832 / JCM 3095 / CBS 277.66 / NBRC 15559 / NCIMB 10079 / NRRL B-1978</strain>
    </source>
</reference>
<organism evidence="4">
    <name type="scientific">Pseudonocardia thermophila</name>
    <dbReference type="NCBI Taxonomy" id="1848"/>
    <lineage>
        <taxon>Bacteria</taxon>
        <taxon>Bacillati</taxon>
        <taxon>Actinomycetota</taxon>
        <taxon>Actinomycetes</taxon>
        <taxon>Pseudonocardiales</taxon>
        <taxon>Pseudonocardiaceae</taxon>
        <taxon>Pseudonocardia</taxon>
    </lineage>
</organism>
<evidence type="ECO:0000269" key="1">
    <source>
    </source>
</evidence>
<evidence type="ECO:0000269" key="2">
    <source ref="1"/>
</evidence>
<evidence type="ECO:0000305" key="3"/>
<evidence type="ECO:0000312" key="4">
    <source>
        <dbReference type="PDB" id="1IRE"/>
    </source>
</evidence>
<evidence type="ECO:0007829" key="5">
    <source>
        <dbReference type="PDB" id="4OB0"/>
    </source>
</evidence>
<evidence type="ECO:0007829" key="6">
    <source>
        <dbReference type="PDB" id="9D5V"/>
    </source>
</evidence>
<evidence type="ECO:0007829" key="7">
    <source>
        <dbReference type="PDB" id="9D6K"/>
    </source>
</evidence>
<comment type="function">
    <text evidence="3">NHase catalyzes the hydration of various nitrile compounds to the corresponding amides.</text>
</comment>
<comment type="catalytic activity">
    <reaction evidence="2 3">
        <text>an aliphatic primary amide = an aliphatic nitrile + H2O</text>
        <dbReference type="Rhea" id="RHEA:12673"/>
        <dbReference type="ChEBI" id="CHEBI:15377"/>
        <dbReference type="ChEBI" id="CHEBI:65285"/>
        <dbReference type="ChEBI" id="CHEBI:80291"/>
        <dbReference type="EC" id="4.2.1.84"/>
    </reaction>
</comment>
<comment type="cofactor">
    <cofactor evidence="1 2">
        <name>Co(2+)</name>
        <dbReference type="ChEBI" id="CHEBI:48828"/>
    </cofactor>
    <text evidence="1 2">Binds 1 Co(2+) ion per heterodimer.</text>
</comment>
<comment type="biophysicochemical properties">
    <temperatureDependence>
        <text>Optimum temperature is 60 degrees Celsius.</text>
    </temperatureDependence>
</comment>
<comment type="subunit">
    <text evidence="1">Heterotetramer of two alpha and two beta chains.</text>
</comment>
<comment type="interaction">
    <interactant intactId="EBI-1032292">
        <id>Q7SID2</id>
    </interactant>
    <interactant intactId="EBI-1032285">
        <id>Q7SID3</id>
    </interactant>
    <organismsDiffer>false</organismsDiffer>
    <experiments>5</experiments>
</comment>
<comment type="biotechnology">
    <text evidence="3">Industrial production of acrylamide is now being developed using some of these enzymes.</text>
</comment>
<comment type="similarity">
    <text evidence="3">Belongs to the nitrile hydratase subunit alpha family.</text>
</comment>
<protein>
    <recommendedName>
        <fullName>Cobalt-containing nitrile hydratase subunit alpha</fullName>
        <shortName>L-NHase</shortName>
        <shortName>L-nitrilase</shortName>
        <ecNumber>4.2.1.84</ecNumber>
    </recommendedName>
</protein>
<accession>Q7SID2</accession>